<gene>
    <name type="primary">Fcer1g</name>
    <name type="synonym">Fce1g</name>
</gene>
<reference key="1">
    <citation type="journal article" date="1989" name="Nature">
        <title>Complete structure and expression in transfected cells of high affinity IgE receptor.</title>
        <authorList>
            <person name="Blank U."/>
            <person name="Ra C."/>
            <person name="Miller L."/>
            <person name="White K."/>
            <person name="Metzger H."/>
            <person name="Kinet J.-P."/>
        </authorList>
    </citation>
    <scope>NUCLEOTIDE SEQUENCE [GENOMIC RNA]</scope>
    <scope>PARTIAL PROTEIN SEQUENCE</scope>
</reference>
<reference key="2">
    <citation type="journal article" date="1991" name="J. Immunol.">
        <title>Analysis of Fc gamma RIII (CD16) membrane expression and association with CD3 zeta and Fc epsilon RI-gamma by site-directed mutation.</title>
        <authorList>
            <person name="Lanier L.L."/>
            <person name="Yu G."/>
            <person name="Phillips J.H."/>
        </authorList>
    </citation>
    <scope>SUBUNIT</scope>
    <scope>INTERACTION WITH FCGR3A AND CD247</scope>
</reference>
<reference key="3">
    <citation type="journal article" date="2007" name="J. Biol. Chem.">
        <title>Neural adrenergic/cyclic AMP regulation of the immunoglobulin E receptor alpha-subunit expression in the mammalian pinealocyte: a neuroendocrine/immune response link?</title>
        <authorList>
            <person name="Ganguly S."/>
            <person name="Grodzki C."/>
            <person name="Sugden D."/>
            <person name="Moller M."/>
            <person name="Odom S."/>
            <person name="Gaildrat P."/>
            <person name="Gery I."/>
            <person name="Siraganian R.P."/>
            <person name="Rivera J."/>
            <person name="Klein D.C."/>
        </authorList>
    </citation>
    <scope>TISSUE SPECIFICITY</scope>
</reference>
<reference key="4">
    <citation type="journal article" date="2013" name="Eur. J. Immunol.">
        <title>Mincle, the receptor for mycobacterial cord factor, forms a functional receptor complex with MCL and FcepsilonRI-gamma.</title>
        <authorList>
            <person name="Lobato-Pascual A."/>
            <person name="Saether P.C."/>
            <person name="Fossum S."/>
            <person name="Dissen E."/>
            <person name="Daws M.R."/>
        </authorList>
    </citation>
    <scope>SUBUNIT</scope>
</reference>
<comment type="function">
    <text evidence="2">Adapter protein containing an immunoreceptor tyrosine-based activation motif (ITAM) that transduces activation signals from various immunoreceptors. As a component of the high-affinity immunoglobulin E (IgE) receptor, mediates allergic inflammatory signaling in mast cells. As a constitutive component of interleukin-3 receptor complex, selectively mediates interleukin 4/IL4 production by basophils priming T-cells toward effector T-helper 2 subset. Associates with pattern recognition receptors CLEC4D and CLEC4E to form a functional signaling complex in myeloid cells. Binding of mycobacterial trehalose 6,6'-dimycolate (TDM) to this receptor complex leads to phosphorylation of ITAM, triggering activation of SYK, CARD9 and NF-kappa-B, consequently driving maturation of antigen-presenting cells and shaping antigen-specific priming of T-cells toward effector T-helper 1 and T-helper 17 cell subtypes. May function cooperatively with other activating receptors. Functionally linked to integrin beta-2/ITGB2-mediated neutrophil activation. Also involved in integrin alpha-2/ITGA2-mediated platelet activation.</text>
</comment>
<comment type="subunit">
    <text evidence="2 3 7 8">IgE Fc receptor is a tetramer of an alpha chain, a beta chain, and two disulfide linked gamma chains. Associates with FCGR1A to form a functional receptor complex (By similarity). The signaling subunit of immunoglobulin gamma (IgG) Fc receptor complex. As a homodimer or a heterodimer of CD247 and FCER1G, associates with the ligand binding subunit FCGR3A to form a functional receptor complex (PubMed:1825220). Associates with CLEC6A. Interacts with CLEC4E (PubMed:23921530). Interacts (via ITAM domain) with SYK (via SH2 domains); activates SYK, enabling integrin-mediated activation of neutrophils and macrophages (By similarity). Interacts with common beta chain of interleukin 3 receptor CSF2RB and recruits SYK in response to IL3 stimulation; this interaction is direct (By similarity). Interacts with CD300LH; the interaction may be indirect. Interacts with CD300LD (By similarity). Interacts with TARM1 (By similarity).</text>
</comment>
<comment type="subcellular location">
    <subcellularLocation>
        <location evidence="1">Cell membrane</location>
        <topology evidence="1">Single-pass type I membrane protein</topology>
    </subcellularLocation>
</comment>
<comment type="tissue specificity">
    <text evidence="6">Expressed in leukocytes and pinealocytes. Expression in the pineal gland does not undergo circadian variations.</text>
</comment>
<comment type="similarity">
    <text evidence="9">Belongs to the CD3Z/FCER1G family.</text>
</comment>
<feature type="signal peptide" evidence="4">
    <location>
        <begin position="1"/>
        <end position="18"/>
    </location>
</feature>
<feature type="chain" id="PRO_0000016505" description="High affinity immunoglobulin epsilon receptor subunit gamma">
    <location>
        <begin position="19"/>
        <end position="86"/>
    </location>
</feature>
<feature type="topological domain" description="Extracellular" evidence="4">
    <location>
        <begin position="19"/>
        <end position="23"/>
    </location>
</feature>
<feature type="transmembrane region" description="Helical" evidence="4">
    <location>
        <begin position="24"/>
        <end position="44"/>
    </location>
</feature>
<feature type="topological domain" description="Cytoplasmic" evidence="4">
    <location>
        <begin position="45"/>
        <end position="86"/>
    </location>
</feature>
<feature type="domain" description="ITAM" evidence="5">
    <location>
        <begin position="54"/>
        <end position="82"/>
    </location>
</feature>
<feature type="modified residue" description="Phosphotyrosine" evidence="2 5">
    <location>
        <position position="65"/>
    </location>
</feature>
<feature type="modified residue" description="Phosphotyrosine" evidence="2 5">
    <location>
        <position position="76"/>
    </location>
</feature>
<feature type="modified residue" description="Phosphothreonine" evidence="2">
    <location>
        <position position="78"/>
    </location>
</feature>
<feature type="disulfide bond" description="Interchain" evidence="1">
    <location>
        <position position="25"/>
    </location>
</feature>
<feature type="helix" evidence="10">
    <location>
        <begin position="23"/>
        <end position="57"/>
    </location>
</feature>
<name>FCERG_RAT</name>
<proteinExistence type="evidence at protein level"/>
<sequence length="86" mass="9765">MIPAVILFLLLLVEEAAALGEPQLCYILDAILFLYGIVLTLLYCRLKIQVRKADIASREKSDAVYTGLNTRNQETYETLKHEKPPQ</sequence>
<protein>
    <recommendedName>
        <fullName>High affinity immunoglobulin epsilon receptor subunit gamma</fullName>
    </recommendedName>
    <alternativeName>
        <fullName>Fc receptor gamma-chain</fullName>
        <shortName>FcRgamma</shortName>
    </alternativeName>
    <alternativeName>
        <fullName>Fc-epsilon RI-gamma</fullName>
    </alternativeName>
    <alternativeName>
        <fullName>IgE Fc receptor subunit gamma</fullName>
        <shortName>FceRI gamma</shortName>
    </alternativeName>
</protein>
<evidence type="ECO:0000250" key="1"/>
<evidence type="ECO:0000250" key="2">
    <source>
        <dbReference type="UniProtKB" id="P20491"/>
    </source>
</evidence>
<evidence type="ECO:0000250" key="3">
    <source>
        <dbReference type="UniProtKB" id="P30273"/>
    </source>
</evidence>
<evidence type="ECO:0000255" key="4"/>
<evidence type="ECO:0000255" key="5">
    <source>
        <dbReference type="PROSITE-ProRule" id="PRU00379"/>
    </source>
</evidence>
<evidence type="ECO:0000269" key="6">
    <source>
    </source>
</evidence>
<evidence type="ECO:0000269" key="7">
    <source>
    </source>
</evidence>
<evidence type="ECO:0000269" key="8">
    <source>
    </source>
</evidence>
<evidence type="ECO:0000305" key="9"/>
<evidence type="ECO:0007829" key="10">
    <source>
        <dbReference type="PDB" id="8Y81"/>
    </source>
</evidence>
<dbReference type="EMBL" id="L04306">
    <property type="status" value="NOT_ANNOTATED_CDS"/>
    <property type="molecule type" value="Genomic_RNA"/>
</dbReference>
<dbReference type="PIR" id="S02118">
    <property type="entry name" value="S02118"/>
</dbReference>
<dbReference type="RefSeq" id="NP_001124473.1">
    <property type="nucleotide sequence ID" value="NM_001131001.2"/>
</dbReference>
<dbReference type="PDB" id="8Y81">
    <property type="method" value="EM"/>
    <property type="resolution" value="2.89 A"/>
    <property type="chains" value="C/G=1-86"/>
</dbReference>
<dbReference type="PDB" id="8Y84">
    <property type="method" value="EM"/>
    <property type="resolution" value="2.98 A"/>
    <property type="chains" value="C/G=1-86"/>
</dbReference>
<dbReference type="PDB" id="8ZGS">
    <property type="method" value="EM"/>
    <property type="resolution" value="3.04 A"/>
    <property type="chains" value="C/G=1-86"/>
</dbReference>
<dbReference type="PDB" id="8ZGT">
    <property type="method" value="EM"/>
    <property type="resolution" value="2.96 A"/>
    <property type="chains" value="C/G=1-86"/>
</dbReference>
<dbReference type="PDBsum" id="8Y81"/>
<dbReference type="PDBsum" id="8Y84"/>
<dbReference type="PDBsum" id="8ZGS"/>
<dbReference type="PDBsum" id="8ZGT"/>
<dbReference type="EMDB" id="EMD-39029"/>
<dbReference type="EMDB" id="EMD-39032"/>
<dbReference type="EMDB" id="EMD-60089"/>
<dbReference type="EMDB" id="EMD-60090"/>
<dbReference type="SMR" id="P20411"/>
<dbReference type="BioGRID" id="247476">
    <property type="interactions" value="2"/>
</dbReference>
<dbReference type="FunCoup" id="P20411">
    <property type="interactions" value="332"/>
</dbReference>
<dbReference type="IntAct" id="P20411">
    <property type="interactions" value="1"/>
</dbReference>
<dbReference type="MINT" id="P20411"/>
<dbReference type="STRING" id="10116.ENSRNOP00000036716"/>
<dbReference type="iPTMnet" id="P20411"/>
<dbReference type="PhosphoSitePlus" id="P20411"/>
<dbReference type="PaxDb" id="10116-ENSRNOP00000036716"/>
<dbReference type="ABCD" id="P20411">
    <property type="antibodies" value="2 sequenced antibodies"/>
</dbReference>
<dbReference type="GeneID" id="25441"/>
<dbReference type="KEGG" id="rno:25441"/>
<dbReference type="UCSC" id="RGD:2599">
    <property type="organism name" value="rat"/>
</dbReference>
<dbReference type="AGR" id="RGD:2599"/>
<dbReference type="CTD" id="2207"/>
<dbReference type="RGD" id="2599">
    <property type="gene designation" value="Fcer1g"/>
</dbReference>
<dbReference type="VEuPathDB" id="HostDB:ENSRNOG00000024159"/>
<dbReference type="eggNOG" id="ENOG502S7XC">
    <property type="taxonomic scope" value="Eukaryota"/>
</dbReference>
<dbReference type="HOGENOM" id="CLU_192374_0_0_1"/>
<dbReference type="InParanoid" id="P20411"/>
<dbReference type="OrthoDB" id="74711at9989"/>
<dbReference type="PhylomeDB" id="P20411"/>
<dbReference type="TreeFam" id="TF330937"/>
<dbReference type="Reactome" id="R-RNO-114604">
    <property type="pathway name" value="GPVI-mediated activation cascade"/>
</dbReference>
<dbReference type="Reactome" id="R-RNO-202733">
    <property type="pathway name" value="Cell surface interactions at the vascular wall"/>
</dbReference>
<dbReference type="Reactome" id="R-RNO-2454202">
    <property type="pathway name" value="Fc epsilon receptor (FCERI) signaling"/>
</dbReference>
<dbReference type="Reactome" id="R-RNO-2730905">
    <property type="pathway name" value="Role of LAT2/NTAL/LAB on calcium mobilization"/>
</dbReference>
<dbReference type="Reactome" id="R-RNO-2871796">
    <property type="pathway name" value="FCERI mediated MAPK activation"/>
</dbReference>
<dbReference type="Reactome" id="R-RNO-2871809">
    <property type="pathway name" value="FCERI mediated Ca+2 mobilization"/>
</dbReference>
<dbReference type="Reactome" id="R-RNO-2871837">
    <property type="pathway name" value="FCERI mediated NF-kB activation"/>
</dbReference>
<dbReference type="Reactome" id="R-RNO-5621480">
    <property type="pathway name" value="Dectin-2 family"/>
</dbReference>
<dbReference type="Reactome" id="R-RNO-6798695">
    <property type="pathway name" value="Neutrophil degranulation"/>
</dbReference>
<dbReference type="Reactome" id="R-RNO-75892">
    <property type="pathway name" value="Platelet Adhesion to exposed collagen"/>
</dbReference>
<dbReference type="PRO" id="PR:P20411"/>
<dbReference type="Proteomes" id="UP000002494">
    <property type="component" value="Chromosome 13"/>
</dbReference>
<dbReference type="Bgee" id="ENSRNOG00000024159">
    <property type="expression patterns" value="Expressed in spleen and 20 other cell types or tissues"/>
</dbReference>
<dbReference type="ExpressionAtlas" id="P20411">
    <property type="expression patterns" value="baseline and differential"/>
</dbReference>
<dbReference type="GO" id="GO:0009986">
    <property type="term" value="C:cell surface"/>
    <property type="evidence" value="ECO:0000266"/>
    <property type="project" value="RGD"/>
</dbReference>
<dbReference type="GO" id="GO:0009897">
    <property type="term" value="C:external side of plasma membrane"/>
    <property type="evidence" value="ECO:0000266"/>
    <property type="project" value="RGD"/>
</dbReference>
<dbReference type="GO" id="GO:0032998">
    <property type="term" value="C:Fc-epsilon receptor I complex"/>
    <property type="evidence" value="ECO:0000266"/>
    <property type="project" value="RGD"/>
</dbReference>
<dbReference type="GO" id="GO:0033001">
    <property type="term" value="C:Fc-gamma receptor III complex"/>
    <property type="evidence" value="ECO:0000314"/>
    <property type="project" value="UniProtKB"/>
</dbReference>
<dbReference type="GO" id="GO:0005886">
    <property type="term" value="C:plasma membrane"/>
    <property type="evidence" value="ECO:0000266"/>
    <property type="project" value="RGD"/>
</dbReference>
<dbReference type="GO" id="GO:0042802">
    <property type="term" value="F:identical protein binding"/>
    <property type="evidence" value="ECO:0000266"/>
    <property type="project" value="RGD"/>
</dbReference>
<dbReference type="GO" id="GO:0019863">
    <property type="term" value="F:IgE binding"/>
    <property type="evidence" value="ECO:0000266"/>
    <property type="project" value="RGD"/>
</dbReference>
<dbReference type="GO" id="GO:0019767">
    <property type="term" value="F:IgE receptor activity"/>
    <property type="evidence" value="ECO:0000266"/>
    <property type="project" value="RGD"/>
</dbReference>
<dbReference type="GO" id="GO:0019864">
    <property type="term" value="F:IgG binding"/>
    <property type="evidence" value="ECO:0000266"/>
    <property type="project" value="RGD"/>
</dbReference>
<dbReference type="GO" id="GO:0046982">
    <property type="term" value="F:protein heterodimerization activity"/>
    <property type="evidence" value="ECO:0000314"/>
    <property type="project" value="UniProtKB"/>
</dbReference>
<dbReference type="GO" id="GO:0042803">
    <property type="term" value="F:protein homodimerization activity"/>
    <property type="evidence" value="ECO:0000314"/>
    <property type="project" value="UniProtKB"/>
</dbReference>
<dbReference type="GO" id="GO:0042590">
    <property type="term" value="P:antigen processing and presentation of exogenous peptide antigen via MHC class I"/>
    <property type="evidence" value="ECO:0000266"/>
    <property type="project" value="RGD"/>
</dbReference>
<dbReference type="GO" id="GO:0019886">
    <property type="term" value="P:antigen processing and presentation of exogenous peptide antigen via MHC class II"/>
    <property type="evidence" value="ECO:0000266"/>
    <property type="project" value="RGD"/>
</dbReference>
<dbReference type="GO" id="GO:0007166">
    <property type="term" value="P:cell surface receptor signaling pathway"/>
    <property type="evidence" value="ECO:0000266"/>
    <property type="project" value="RGD"/>
</dbReference>
<dbReference type="GO" id="GO:0071404">
    <property type="term" value="P:cellular response to low-density lipoprotein particle stimulus"/>
    <property type="evidence" value="ECO:0000250"/>
    <property type="project" value="UniProtKB"/>
</dbReference>
<dbReference type="GO" id="GO:0042742">
    <property type="term" value="P:defense response to bacterium"/>
    <property type="evidence" value="ECO:0000266"/>
    <property type="project" value="RGD"/>
</dbReference>
<dbReference type="GO" id="GO:0002431">
    <property type="term" value="P:Fc receptor mediated stimulatory signaling pathway"/>
    <property type="evidence" value="ECO:0000266"/>
    <property type="project" value="RGD"/>
</dbReference>
<dbReference type="GO" id="GO:0038095">
    <property type="term" value="P:Fc-epsilon receptor signaling pathway"/>
    <property type="evidence" value="ECO:0000266"/>
    <property type="project" value="RGD"/>
</dbReference>
<dbReference type="GO" id="GO:0038094">
    <property type="term" value="P:Fc-gamma receptor signaling pathway"/>
    <property type="evidence" value="ECO:0000266"/>
    <property type="project" value="RGD"/>
</dbReference>
<dbReference type="GO" id="GO:0016064">
    <property type="term" value="P:immunoglobulin mediated immune response"/>
    <property type="evidence" value="ECO:0000266"/>
    <property type="project" value="RGD"/>
</dbReference>
<dbReference type="GO" id="GO:0045087">
    <property type="term" value="P:innate immune response"/>
    <property type="evidence" value="ECO:0000266"/>
    <property type="project" value="RGD"/>
</dbReference>
<dbReference type="GO" id="GO:0007229">
    <property type="term" value="P:integrin-mediated signaling pathway"/>
    <property type="evidence" value="ECO:0000266"/>
    <property type="project" value="RGD"/>
</dbReference>
<dbReference type="GO" id="GO:0038156">
    <property type="term" value="P:interleukin-3-mediated signaling pathway"/>
    <property type="evidence" value="ECO:0000250"/>
    <property type="project" value="UniProtKB"/>
</dbReference>
<dbReference type="GO" id="GO:0045576">
    <property type="term" value="P:mast cell activation"/>
    <property type="evidence" value="ECO:0000266"/>
    <property type="project" value="RGD"/>
</dbReference>
<dbReference type="GO" id="GO:0033024">
    <property type="term" value="P:mast cell apoptotic process"/>
    <property type="evidence" value="ECO:0000266"/>
    <property type="project" value="RGD"/>
</dbReference>
<dbReference type="GO" id="GO:0043303">
    <property type="term" value="P:mast cell degranulation"/>
    <property type="evidence" value="ECO:0000266"/>
    <property type="project" value="RGD"/>
</dbReference>
<dbReference type="GO" id="GO:0033026">
    <property type="term" value="P:negative regulation of mast cell apoptotic process"/>
    <property type="evidence" value="ECO:0000266"/>
    <property type="project" value="RGD"/>
</dbReference>
<dbReference type="GO" id="GO:0002283">
    <property type="term" value="P:neutrophil activation involved in immune response"/>
    <property type="evidence" value="ECO:0000266"/>
    <property type="project" value="RGD"/>
</dbReference>
<dbReference type="GO" id="GO:0030593">
    <property type="term" value="P:neutrophil chemotaxis"/>
    <property type="evidence" value="ECO:0000266"/>
    <property type="project" value="RGD"/>
</dbReference>
<dbReference type="GO" id="GO:0030316">
    <property type="term" value="P:osteoclast differentiation"/>
    <property type="evidence" value="ECO:0000266"/>
    <property type="project" value="RGD"/>
</dbReference>
<dbReference type="GO" id="GO:0006911">
    <property type="term" value="P:phagocytosis, engulfment"/>
    <property type="evidence" value="ECO:0000266"/>
    <property type="project" value="RGD"/>
</dbReference>
<dbReference type="GO" id="GO:0050778">
    <property type="term" value="P:positive regulation of immune response"/>
    <property type="evidence" value="ECO:0000266"/>
    <property type="project" value="RGD"/>
</dbReference>
<dbReference type="GO" id="GO:0032733">
    <property type="term" value="P:positive regulation of interleukin-10 production"/>
    <property type="evidence" value="ECO:0000266"/>
    <property type="project" value="RGD"/>
</dbReference>
<dbReference type="GO" id="GO:0032753">
    <property type="term" value="P:positive regulation of interleukin-4 production"/>
    <property type="evidence" value="ECO:0000250"/>
    <property type="project" value="UniProtKB"/>
</dbReference>
<dbReference type="GO" id="GO:0032755">
    <property type="term" value="P:positive regulation of interleukin-6 production"/>
    <property type="evidence" value="ECO:0000266"/>
    <property type="project" value="RGD"/>
</dbReference>
<dbReference type="GO" id="GO:0032765">
    <property type="term" value="P:positive regulation of mast cell cytokine production"/>
    <property type="evidence" value="ECO:0000266"/>
    <property type="project" value="RGD"/>
</dbReference>
<dbReference type="GO" id="GO:0043306">
    <property type="term" value="P:positive regulation of mast cell degranulation"/>
    <property type="evidence" value="ECO:0000266"/>
    <property type="project" value="RGD"/>
</dbReference>
<dbReference type="GO" id="GO:0050766">
    <property type="term" value="P:positive regulation of phagocytosis"/>
    <property type="evidence" value="ECO:0000266"/>
    <property type="project" value="RGD"/>
</dbReference>
<dbReference type="GO" id="GO:2000010">
    <property type="term" value="P:positive regulation of protein localization to cell surface"/>
    <property type="evidence" value="ECO:0000266"/>
    <property type="project" value="RGD"/>
</dbReference>
<dbReference type="GO" id="GO:0032760">
    <property type="term" value="P:positive regulation of tumor necrosis factor production"/>
    <property type="evidence" value="ECO:0000266"/>
    <property type="project" value="RGD"/>
</dbReference>
<dbReference type="GO" id="GO:0001812">
    <property type="term" value="P:positive regulation of type I hypersensitivity"/>
    <property type="evidence" value="ECO:0000266"/>
    <property type="project" value="RGD"/>
</dbReference>
<dbReference type="GO" id="GO:0001798">
    <property type="term" value="P:positive regulation of type IIa hypersensitivity"/>
    <property type="evidence" value="ECO:0000266"/>
    <property type="project" value="RGD"/>
</dbReference>
<dbReference type="GO" id="GO:0001805">
    <property type="term" value="P:positive regulation of type III hypersensitivity"/>
    <property type="evidence" value="ECO:0000266"/>
    <property type="project" value="RGD"/>
</dbReference>
<dbReference type="GO" id="GO:0072659">
    <property type="term" value="P:protein localization to plasma membrane"/>
    <property type="evidence" value="ECO:0000266"/>
    <property type="project" value="RGD"/>
</dbReference>
<dbReference type="GO" id="GO:0031623">
    <property type="term" value="P:receptor internalization"/>
    <property type="evidence" value="ECO:0000250"/>
    <property type="project" value="UniProtKB"/>
</dbReference>
<dbReference type="GO" id="GO:0050776">
    <property type="term" value="P:regulation of immune response"/>
    <property type="evidence" value="ECO:0000266"/>
    <property type="project" value="RGD"/>
</dbReference>
<dbReference type="GO" id="GO:0010543">
    <property type="term" value="P:regulation of platelet activation"/>
    <property type="evidence" value="ECO:0000266"/>
    <property type="project" value="RGD"/>
</dbReference>
<dbReference type="GO" id="GO:0002554">
    <property type="term" value="P:serotonin secretion by platelet"/>
    <property type="evidence" value="ECO:0000266"/>
    <property type="project" value="RGD"/>
</dbReference>
<dbReference type="GO" id="GO:0007165">
    <property type="term" value="P:signal transduction"/>
    <property type="evidence" value="ECO:0000266"/>
    <property type="project" value="RGD"/>
</dbReference>
<dbReference type="GO" id="GO:0002292">
    <property type="term" value="P:T cell differentiation involved in immune response"/>
    <property type="evidence" value="ECO:0000266"/>
    <property type="project" value="RGD"/>
</dbReference>
<dbReference type="InterPro" id="IPR021663">
    <property type="entry name" value="CD3_zeta/IgE_Fc_rcpt_gamma"/>
</dbReference>
<dbReference type="InterPro" id="IPR042340">
    <property type="entry name" value="FCER1G"/>
</dbReference>
<dbReference type="InterPro" id="IPR003110">
    <property type="entry name" value="Phos_immunorcpt_sig_ITAM"/>
</dbReference>
<dbReference type="PANTHER" id="PTHR16803">
    <property type="entry name" value="HIGH AFFINITY IMMUNOGLOBULIN EPSILON RECEPTOR GAMMA-SUBUNIT"/>
    <property type="match status" value="1"/>
</dbReference>
<dbReference type="PANTHER" id="PTHR16803:SF0">
    <property type="entry name" value="HIGH AFFINITY IMMUNOGLOBULIN EPSILON RECEPTOR SUBUNIT GAMMA"/>
    <property type="match status" value="1"/>
</dbReference>
<dbReference type="Pfam" id="PF02189">
    <property type="entry name" value="ITAM"/>
    <property type="match status" value="1"/>
</dbReference>
<dbReference type="Pfam" id="PF11628">
    <property type="entry name" value="TCR_zetazeta"/>
    <property type="match status" value="1"/>
</dbReference>
<dbReference type="SMART" id="SM00077">
    <property type="entry name" value="ITAM"/>
    <property type="match status" value="1"/>
</dbReference>
<dbReference type="PROSITE" id="PS51055">
    <property type="entry name" value="ITAM_1"/>
    <property type="match status" value="1"/>
</dbReference>
<accession>P20411</accession>
<organism>
    <name type="scientific">Rattus norvegicus</name>
    <name type="common">Rat</name>
    <dbReference type="NCBI Taxonomy" id="10116"/>
    <lineage>
        <taxon>Eukaryota</taxon>
        <taxon>Metazoa</taxon>
        <taxon>Chordata</taxon>
        <taxon>Craniata</taxon>
        <taxon>Vertebrata</taxon>
        <taxon>Euteleostomi</taxon>
        <taxon>Mammalia</taxon>
        <taxon>Eutheria</taxon>
        <taxon>Euarchontoglires</taxon>
        <taxon>Glires</taxon>
        <taxon>Rodentia</taxon>
        <taxon>Myomorpha</taxon>
        <taxon>Muroidea</taxon>
        <taxon>Muridae</taxon>
        <taxon>Murinae</taxon>
        <taxon>Rattus</taxon>
    </lineage>
</organism>
<keyword id="KW-0002">3D-structure</keyword>
<keyword id="KW-1003">Cell membrane</keyword>
<keyword id="KW-0903">Direct protein sequencing</keyword>
<keyword id="KW-1015">Disulfide bond</keyword>
<keyword id="KW-0389">IgE-binding protein</keyword>
<keyword id="KW-0391">Immunity</keyword>
<keyword id="KW-0399">Innate immunity</keyword>
<keyword id="KW-0472">Membrane</keyword>
<keyword id="KW-0597">Phosphoprotein</keyword>
<keyword id="KW-0675">Receptor</keyword>
<keyword id="KW-1185">Reference proteome</keyword>
<keyword id="KW-0732">Signal</keyword>
<keyword id="KW-0812">Transmembrane</keyword>
<keyword id="KW-1133">Transmembrane helix</keyword>